<organism>
    <name type="scientific">Lysinibacillus sphaericus (strain C3-41)</name>
    <dbReference type="NCBI Taxonomy" id="444177"/>
    <lineage>
        <taxon>Bacteria</taxon>
        <taxon>Bacillati</taxon>
        <taxon>Bacillota</taxon>
        <taxon>Bacilli</taxon>
        <taxon>Bacillales</taxon>
        <taxon>Bacillaceae</taxon>
        <taxon>Lysinibacillus</taxon>
    </lineage>
</organism>
<accession>B1HT11</accession>
<reference key="1">
    <citation type="journal article" date="2008" name="J. Bacteriol.">
        <title>Complete genome sequence of the mosquitocidal bacterium Bacillus sphaericus C3-41 and comparison with those of closely related Bacillus species.</title>
        <authorList>
            <person name="Hu X."/>
            <person name="Fan W."/>
            <person name="Han B."/>
            <person name="Liu H."/>
            <person name="Zheng D."/>
            <person name="Li Q."/>
            <person name="Dong W."/>
            <person name="Yan J."/>
            <person name="Gao M."/>
            <person name="Berry C."/>
            <person name="Yuan Z."/>
        </authorList>
    </citation>
    <scope>NUCLEOTIDE SEQUENCE [LARGE SCALE GENOMIC DNA]</scope>
    <source>
        <strain>C3-41</strain>
    </source>
</reference>
<sequence>MKQELKIPQATTKRLPLYYRFIQNFAQEGMERISSKELSEAMKIDSATIRRDFSYFGALGKKGYGYDVQHLLQFFSQTLDQHETTKVALIGVGNLGSALLKYNFQKNHNTHIVVAFDSKAPKDGKMISNIPVFHPDLLEEKYAEYGAELAILTVSPRSAQKMADRLAAMNAKGILNFTPERLTVPDSMQLLTIDLSVELQALIYLIRNQEV</sequence>
<dbReference type="EMBL" id="CP000817">
    <property type="protein sequence ID" value="ACA37765.1"/>
    <property type="molecule type" value="Genomic_DNA"/>
</dbReference>
<dbReference type="RefSeq" id="WP_012291935.1">
    <property type="nucleotide sequence ID" value="NC_010382.1"/>
</dbReference>
<dbReference type="SMR" id="B1HT11"/>
<dbReference type="EnsemblBacteria" id="ACA37765">
    <property type="protein sequence ID" value="ACA37765"/>
    <property type="gene ID" value="Bsph_0129"/>
</dbReference>
<dbReference type="KEGG" id="lsp:Bsph_0129"/>
<dbReference type="HOGENOM" id="CLU_061534_1_1_9"/>
<dbReference type="Proteomes" id="UP000002164">
    <property type="component" value="Chromosome"/>
</dbReference>
<dbReference type="GO" id="GO:0005737">
    <property type="term" value="C:cytoplasm"/>
    <property type="evidence" value="ECO:0007669"/>
    <property type="project" value="UniProtKB-SubCell"/>
</dbReference>
<dbReference type="GO" id="GO:0003677">
    <property type="term" value="F:DNA binding"/>
    <property type="evidence" value="ECO:0007669"/>
    <property type="project" value="UniProtKB-UniRule"/>
</dbReference>
<dbReference type="GO" id="GO:0003700">
    <property type="term" value="F:DNA-binding transcription factor activity"/>
    <property type="evidence" value="ECO:0007669"/>
    <property type="project" value="UniProtKB-UniRule"/>
</dbReference>
<dbReference type="GO" id="GO:0045892">
    <property type="term" value="P:negative regulation of DNA-templated transcription"/>
    <property type="evidence" value="ECO:0007669"/>
    <property type="project" value="InterPro"/>
</dbReference>
<dbReference type="GO" id="GO:0051775">
    <property type="term" value="P:response to redox state"/>
    <property type="evidence" value="ECO:0007669"/>
    <property type="project" value="InterPro"/>
</dbReference>
<dbReference type="Gene3D" id="3.40.50.720">
    <property type="entry name" value="NAD(P)-binding Rossmann-like Domain"/>
    <property type="match status" value="1"/>
</dbReference>
<dbReference type="Gene3D" id="1.10.10.10">
    <property type="entry name" value="Winged helix-like DNA-binding domain superfamily/Winged helix DNA-binding domain"/>
    <property type="match status" value="1"/>
</dbReference>
<dbReference type="HAMAP" id="MF_01131">
    <property type="entry name" value="Rex"/>
    <property type="match status" value="1"/>
</dbReference>
<dbReference type="InterPro" id="IPR003781">
    <property type="entry name" value="CoA-bd"/>
</dbReference>
<dbReference type="InterPro" id="IPR036291">
    <property type="entry name" value="NAD(P)-bd_dom_sf"/>
</dbReference>
<dbReference type="InterPro" id="IPR009718">
    <property type="entry name" value="Rex_DNA-bd_C_dom"/>
</dbReference>
<dbReference type="InterPro" id="IPR022876">
    <property type="entry name" value="Tscrpt_rep_Rex"/>
</dbReference>
<dbReference type="InterPro" id="IPR036388">
    <property type="entry name" value="WH-like_DNA-bd_sf"/>
</dbReference>
<dbReference type="InterPro" id="IPR036390">
    <property type="entry name" value="WH_DNA-bd_sf"/>
</dbReference>
<dbReference type="NCBIfam" id="NF003989">
    <property type="entry name" value="PRK05472.1-3"/>
    <property type="match status" value="1"/>
</dbReference>
<dbReference type="NCBIfam" id="NF003991">
    <property type="entry name" value="PRK05472.1-5"/>
    <property type="match status" value="1"/>
</dbReference>
<dbReference type="NCBIfam" id="NF003994">
    <property type="entry name" value="PRK05472.2-3"/>
    <property type="match status" value="1"/>
</dbReference>
<dbReference type="NCBIfam" id="NF003995">
    <property type="entry name" value="PRK05472.2-4"/>
    <property type="match status" value="1"/>
</dbReference>
<dbReference type="NCBIfam" id="NF003996">
    <property type="entry name" value="PRK05472.2-5"/>
    <property type="match status" value="1"/>
</dbReference>
<dbReference type="PANTHER" id="PTHR35786">
    <property type="entry name" value="REDOX-SENSING TRANSCRIPTIONAL REPRESSOR REX"/>
    <property type="match status" value="1"/>
</dbReference>
<dbReference type="PANTHER" id="PTHR35786:SF1">
    <property type="entry name" value="REDOX-SENSING TRANSCRIPTIONAL REPRESSOR REX 1"/>
    <property type="match status" value="1"/>
</dbReference>
<dbReference type="Pfam" id="PF02629">
    <property type="entry name" value="CoA_binding"/>
    <property type="match status" value="1"/>
</dbReference>
<dbReference type="Pfam" id="PF06971">
    <property type="entry name" value="Put_DNA-bind_N"/>
    <property type="match status" value="1"/>
</dbReference>
<dbReference type="SMART" id="SM00881">
    <property type="entry name" value="CoA_binding"/>
    <property type="match status" value="1"/>
</dbReference>
<dbReference type="SUPFAM" id="SSF51735">
    <property type="entry name" value="NAD(P)-binding Rossmann-fold domains"/>
    <property type="match status" value="1"/>
</dbReference>
<dbReference type="SUPFAM" id="SSF46785">
    <property type="entry name" value="Winged helix' DNA-binding domain"/>
    <property type="match status" value="1"/>
</dbReference>
<protein>
    <recommendedName>
        <fullName evidence="1">Redox-sensing transcriptional repressor Rex</fullName>
    </recommendedName>
</protein>
<name>REX_LYSSC</name>
<feature type="chain" id="PRO_1000164083" description="Redox-sensing transcriptional repressor Rex">
    <location>
        <begin position="1"/>
        <end position="211"/>
    </location>
</feature>
<feature type="DNA-binding region" description="H-T-H motif" evidence="1">
    <location>
        <begin position="17"/>
        <end position="56"/>
    </location>
</feature>
<feature type="binding site" evidence="1">
    <location>
        <begin position="91"/>
        <end position="96"/>
    </location>
    <ligand>
        <name>NAD(+)</name>
        <dbReference type="ChEBI" id="CHEBI:57540"/>
    </ligand>
</feature>
<proteinExistence type="inferred from homology"/>
<evidence type="ECO:0000255" key="1">
    <source>
        <dbReference type="HAMAP-Rule" id="MF_01131"/>
    </source>
</evidence>
<comment type="function">
    <text evidence="1">Modulates transcription in response to changes in cellular NADH/NAD(+) redox state.</text>
</comment>
<comment type="subunit">
    <text evidence="1">Homodimer.</text>
</comment>
<comment type="subcellular location">
    <subcellularLocation>
        <location evidence="1">Cytoplasm</location>
    </subcellularLocation>
</comment>
<comment type="similarity">
    <text evidence="1">Belongs to the transcriptional regulatory Rex family.</text>
</comment>
<keyword id="KW-0963">Cytoplasm</keyword>
<keyword id="KW-0238">DNA-binding</keyword>
<keyword id="KW-0520">NAD</keyword>
<keyword id="KW-0678">Repressor</keyword>
<keyword id="KW-0804">Transcription</keyword>
<keyword id="KW-0805">Transcription regulation</keyword>
<gene>
    <name evidence="1" type="primary">rex</name>
    <name type="ordered locus">Bsph_0129</name>
</gene>